<name>Y2250_MYCTU</name>
<sequence>MLSMSNDRADTGGRILRAAASCVVDYGVDRVTLAEIARRAGVSRPTVYRRWPDTRSIMASMLTSHIADVLREVPLDGDDREALVKQIVAVADRLRGDDLIMSVMHSELARVYITERLGTSQQVLIEGLAARLTVAQRSGSVRSGDARRLATMVLLIAQSTIQSADIVDSILDSAALATELTHALNGYLC</sequence>
<accession>P9WMC5</accession>
<accession>L0T996</accession>
<accession>Q10528</accession>
<gene>
    <name type="ordered locus">Rv2250c</name>
    <name type="ORF">MTCY427.32c</name>
</gene>
<reference key="1">
    <citation type="journal article" date="1998" name="Nature">
        <title>Deciphering the biology of Mycobacterium tuberculosis from the complete genome sequence.</title>
        <authorList>
            <person name="Cole S.T."/>
            <person name="Brosch R."/>
            <person name="Parkhill J."/>
            <person name="Garnier T."/>
            <person name="Churcher C.M."/>
            <person name="Harris D.E."/>
            <person name="Gordon S.V."/>
            <person name="Eiglmeier K."/>
            <person name="Gas S."/>
            <person name="Barry C.E. III"/>
            <person name="Tekaia F."/>
            <person name="Badcock K."/>
            <person name="Basham D."/>
            <person name="Brown D."/>
            <person name="Chillingworth T."/>
            <person name="Connor R."/>
            <person name="Davies R.M."/>
            <person name="Devlin K."/>
            <person name="Feltwell T."/>
            <person name="Gentles S."/>
            <person name="Hamlin N."/>
            <person name="Holroyd S."/>
            <person name="Hornsby T."/>
            <person name="Jagels K."/>
            <person name="Krogh A."/>
            <person name="McLean J."/>
            <person name="Moule S."/>
            <person name="Murphy L.D."/>
            <person name="Oliver S."/>
            <person name="Osborne J."/>
            <person name="Quail M.A."/>
            <person name="Rajandream M.A."/>
            <person name="Rogers J."/>
            <person name="Rutter S."/>
            <person name="Seeger K."/>
            <person name="Skelton S."/>
            <person name="Squares S."/>
            <person name="Squares R."/>
            <person name="Sulston J.E."/>
            <person name="Taylor K."/>
            <person name="Whitehead S."/>
            <person name="Barrell B.G."/>
        </authorList>
    </citation>
    <scope>NUCLEOTIDE SEQUENCE [LARGE SCALE GENOMIC DNA]</scope>
    <source>
        <strain>ATCC 25618 / H37Rv</strain>
    </source>
</reference>
<reference key="2">
    <citation type="journal article" date="2011" name="Mol. Cell. Proteomics">
        <title>Proteogenomic analysis of Mycobacterium tuberculosis by high resolution mass spectrometry.</title>
        <authorList>
            <person name="Kelkar D.S."/>
            <person name="Kumar D."/>
            <person name="Kumar P."/>
            <person name="Balakrishnan L."/>
            <person name="Muthusamy B."/>
            <person name="Yadav A.K."/>
            <person name="Shrivastava P."/>
            <person name="Marimuthu A."/>
            <person name="Anand S."/>
            <person name="Sundaram H."/>
            <person name="Kingsbury R."/>
            <person name="Harsha H.C."/>
            <person name="Nair B."/>
            <person name="Prasad T.S."/>
            <person name="Chauhan D.S."/>
            <person name="Katoch K."/>
            <person name="Katoch V.M."/>
            <person name="Kumar P."/>
            <person name="Chaerkady R."/>
            <person name="Ramachandran S."/>
            <person name="Dash D."/>
            <person name="Pandey A."/>
        </authorList>
    </citation>
    <scope>IDENTIFICATION BY MASS SPECTROMETRY [LARGE SCALE ANALYSIS]</scope>
    <source>
        <strain>ATCC 25618 / H37Rv</strain>
    </source>
</reference>
<organism>
    <name type="scientific">Mycobacterium tuberculosis (strain ATCC 25618 / H37Rv)</name>
    <dbReference type="NCBI Taxonomy" id="83332"/>
    <lineage>
        <taxon>Bacteria</taxon>
        <taxon>Bacillati</taxon>
        <taxon>Actinomycetota</taxon>
        <taxon>Actinomycetes</taxon>
        <taxon>Mycobacteriales</taxon>
        <taxon>Mycobacteriaceae</taxon>
        <taxon>Mycobacterium</taxon>
        <taxon>Mycobacterium tuberculosis complex</taxon>
    </lineage>
</organism>
<proteinExistence type="evidence at protein level"/>
<feature type="chain" id="PRO_0000070670" description="Uncharacterized HTH-type transcriptional regulator Rv2250c">
    <location>
        <begin position="1"/>
        <end position="189"/>
    </location>
</feature>
<feature type="domain" description="HTH tetR-type" evidence="1">
    <location>
        <begin position="9"/>
        <end position="69"/>
    </location>
</feature>
<feature type="DNA-binding region" description="H-T-H motif" evidence="1">
    <location>
        <begin position="32"/>
        <end position="51"/>
    </location>
</feature>
<evidence type="ECO:0000255" key="1">
    <source>
        <dbReference type="PROSITE-ProRule" id="PRU00335"/>
    </source>
</evidence>
<protein>
    <recommendedName>
        <fullName>Uncharacterized HTH-type transcriptional regulator Rv2250c</fullName>
    </recommendedName>
</protein>
<dbReference type="EMBL" id="AL123456">
    <property type="protein sequence ID" value="CCP45030.1"/>
    <property type="molecule type" value="Genomic_DNA"/>
</dbReference>
<dbReference type="PIR" id="F70779">
    <property type="entry name" value="F70779"/>
</dbReference>
<dbReference type="RefSeq" id="NP_216766.2">
    <property type="nucleotide sequence ID" value="NC_000962.3"/>
</dbReference>
<dbReference type="RefSeq" id="WP_003411595.1">
    <property type="nucleotide sequence ID" value="NZ_NVQJ01000008.1"/>
</dbReference>
<dbReference type="SMR" id="P9WMC5"/>
<dbReference type="STRING" id="83332.Rv2250c"/>
<dbReference type="PaxDb" id="83332-Rv2250c"/>
<dbReference type="DNASU" id="888018"/>
<dbReference type="GeneID" id="888018"/>
<dbReference type="KEGG" id="mtu:Rv2250c"/>
<dbReference type="KEGG" id="mtv:RVBD_2250c"/>
<dbReference type="TubercuList" id="Rv2250c"/>
<dbReference type="eggNOG" id="COG1309">
    <property type="taxonomic scope" value="Bacteria"/>
</dbReference>
<dbReference type="InParanoid" id="P9WMC5"/>
<dbReference type="OrthoDB" id="3267320at2"/>
<dbReference type="PhylomeDB" id="P9WMC5"/>
<dbReference type="Proteomes" id="UP000001584">
    <property type="component" value="Chromosome"/>
</dbReference>
<dbReference type="GO" id="GO:0003700">
    <property type="term" value="F:DNA-binding transcription factor activity"/>
    <property type="evidence" value="ECO:0000318"/>
    <property type="project" value="GO_Central"/>
</dbReference>
<dbReference type="GO" id="GO:0000976">
    <property type="term" value="F:transcription cis-regulatory region binding"/>
    <property type="evidence" value="ECO:0000318"/>
    <property type="project" value="GO_Central"/>
</dbReference>
<dbReference type="GO" id="GO:0006355">
    <property type="term" value="P:regulation of DNA-templated transcription"/>
    <property type="evidence" value="ECO:0000318"/>
    <property type="project" value="GO_Central"/>
</dbReference>
<dbReference type="Gene3D" id="1.10.357.10">
    <property type="entry name" value="Tetracycline Repressor, domain 2"/>
    <property type="match status" value="1"/>
</dbReference>
<dbReference type="InterPro" id="IPR023772">
    <property type="entry name" value="DNA-bd_HTH_TetR-type_CS"/>
</dbReference>
<dbReference type="InterPro" id="IPR009057">
    <property type="entry name" value="Homeodomain-like_sf"/>
</dbReference>
<dbReference type="InterPro" id="IPR050109">
    <property type="entry name" value="HTH-type_TetR-like_transc_reg"/>
</dbReference>
<dbReference type="InterPro" id="IPR001647">
    <property type="entry name" value="HTH_TetR"/>
</dbReference>
<dbReference type="InterPro" id="IPR036271">
    <property type="entry name" value="Tet_transcr_reg_TetR-rel_C_sf"/>
</dbReference>
<dbReference type="PANTHER" id="PTHR30055">
    <property type="entry name" value="HTH-TYPE TRANSCRIPTIONAL REGULATOR RUTR"/>
    <property type="match status" value="1"/>
</dbReference>
<dbReference type="PANTHER" id="PTHR30055:SF238">
    <property type="entry name" value="MYCOFACTOCIN BIOSYNTHESIS TRANSCRIPTIONAL REGULATOR MFTR-RELATED"/>
    <property type="match status" value="1"/>
</dbReference>
<dbReference type="Pfam" id="PF00440">
    <property type="entry name" value="TetR_N"/>
    <property type="match status" value="1"/>
</dbReference>
<dbReference type="PRINTS" id="PR00455">
    <property type="entry name" value="HTHTETR"/>
</dbReference>
<dbReference type="SUPFAM" id="SSF46689">
    <property type="entry name" value="Homeodomain-like"/>
    <property type="match status" value="1"/>
</dbReference>
<dbReference type="SUPFAM" id="SSF48498">
    <property type="entry name" value="Tetracyclin repressor-like, C-terminal domain"/>
    <property type="match status" value="1"/>
</dbReference>
<dbReference type="PROSITE" id="PS01081">
    <property type="entry name" value="HTH_TETR_1"/>
    <property type="match status" value="1"/>
</dbReference>
<dbReference type="PROSITE" id="PS50977">
    <property type="entry name" value="HTH_TETR_2"/>
    <property type="match status" value="1"/>
</dbReference>
<keyword id="KW-0238">DNA-binding</keyword>
<keyword id="KW-1185">Reference proteome</keyword>
<keyword id="KW-0804">Transcription</keyword>
<keyword id="KW-0805">Transcription regulation</keyword>